<accession>Q6DGZ0</accession>
<organism>
    <name type="scientific">Danio rerio</name>
    <name type="common">Zebrafish</name>
    <name type="synonym">Brachydanio rerio</name>
    <dbReference type="NCBI Taxonomy" id="7955"/>
    <lineage>
        <taxon>Eukaryota</taxon>
        <taxon>Metazoa</taxon>
        <taxon>Chordata</taxon>
        <taxon>Craniata</taxon>
        <taxon>Vertebrata</taxon>
        <taxon>Euteleostomi</taxon>
        <taxon>Actinopterygii</taxon>
        <taxon>Neopterygii</taxon>
        <taxon>Teleostei</taxon>
        <taxon>Ostariophysi</taxon>
        <taxon>Cypriniformes</taxon>
        <taxon>Danionidae</taxon>
        <taxon>Danioninae</taxon>
        <taxon>Danio</taxon>
    </lineage>
</organism>
<proteinExistence type="evidence at transcript level"/>
<sequence length="262" mass="30347">MADDEDDYMSDAFLNQISDVRPGVPMVKRVKEAIKKEALHKEKDIQNRQKSFKEQEKESREAALQSSIGSQNKGFALLQKMGYKAGQGLGKEGAGRVEPVPLNIKTDRGGIGMEEVKKRKADEELQNYRRKVHMKQHLEKKSIEDFRVRKRTEREERQTQGDLRKSQRACEQLDNQKGITVPRDCWYWPEVEKNEESELLEEEIKTEESDEEEELTPLDKLQFLTSYLRGVHYYCIWCGTAYNDEEDLGTNCPGDTAADHDD</sequence>
<name>GPT11_DANRE</name>
<reference key="1">
    <citation type="submission" date="2004-07" db="EMBL/GenBank/DDBJ databases">
        <authorList>
            <consortium name="NIH - Zebrafish Gene Collection (ZGC) project"/>
        </authorList>
    </citation>
    <scope>NUCLEOTIDE SEQUENCE [LARGE SCALE MRNA]</scope>
    <source>
        <tissue>Eye</tissue>
    </source>
</reference>
<comment type="subcellular location">
    <subcellularLocation>
        <location evidence="1">Chromosome</location>
        <location evidence="1">Centromere</location>
        <location evidence="1">Kinetochore</location>
    </subcellularLocation>
</comment>
<comment type="similarity">
    <text evidence="5">Belongs to the GPATCH11 family.</text>
</comment>
<gene>
    <name type="primary">gpatch11</name>
    <name type="synonym">ccdc75</name>
    <name type="ORF">zgc:92714</name>
</gene>
<feature type="chain" id="PRO_0000279754" description="G patch domain-containing protein 11">
    <location>
        <begin position="1"/>
        <end position="262"/>
    </location>
</feature>
<feature type="domain" description="G-patch" evidence="3">
    <location>
        <begin position="70"/>
        <end position="116"/>
    </location>
</feature>
<feature type="region of interest" description="Disordered" evidence="4">
    <location>
        <begin position="39"/>
        <end position="71"/>
    </location>
</feature>
<feature type="region of interest" description="Disordered" evidence="4">
    <location>
        <begin position="88"/>
        <end position="169"/>
    </location>
</feature>
<feature type="coiled-coil region" evidence="2">
    <location>
        <begin position="41"/>
        <end position="62"/>
    </location>
</feature>
<feature type="compositionally biased region" description="Basic and acidic residues" evidence="4">
    <location>
        <begin position="39"/>
        <end position="61"/>
    </location>
</feature>
<feature type="compositionally biased region" description="Basic and acidic residues" evidence="4">
    <location>
        <begin position="114"/>
        <end position="127"/>
    </location>
</feature>
<feature type="compositionally biased region" description="Basic and acidic residues" evidence="4">
    <location>
        <begin position="136"/>
        <end position="165"/>
    </location>
</feature>
<protein>
    <recommendedName>
        <fullName>G patch domain-containing protein 11</fullName>
    </recommendedName>
    <alternativeName>
        <fullName>Coiled-coil domain-containing protein 75</fullName>
    </alternativeName>
</protein>
<evidence type="ECO:0000250" key="1">
    <source>
        <dbReference type="UniProtKB" id="Q8N954"/>
    </source>
</evidence>
<evidence type="ECO:0000255" key="2"/>
<evidence type="ECO:0000255" key="3">
    <source>
        <dbReference type="PROSITE-ProRule" id="PRU00092"/>
    </source>
</evidence>
<evidence type="ECO:0000256" key="4">
    <source>
        <dbReference type="SAM" id="MobiDB-lite"/>
    </source>
</evidence>
<evidence type="ECO:0000305" key="5"/>
<dbReference type="EMBL" id="BC076194">
    <property type="protein sequence ID" value="AAH76194.1"/>
    <property type="molecule type" value="mRNA"/>
</dbReference>
<dbReference type="RefSeq" id="NP_001002393.1">
    <property type="nucleotide sequence ID" value="NM_001002393.1"/>
</dbReference>
<dbReference type="FunCoup" id="Q6DGZ0">
    <property type="interactions" value="1648"/>
</dbReference>
<dbReference type="STRING" id="7955.ENSDARP00000034146"/>
<dbReference type="PaxDb" id="7955-ENSDARP00000034146"/>
<dbReference type="GeneID" id="436666"/>
<dbReference type="KEGG" id="dre:436666"/>
<dbReference type="AGR" id="ZFIN:ZDB-GENE-040718-89"/>
<dbReference type="CTD" id="253635"/>
<dbReference type="ZFIN" id="ZDB-GENE-040718-89">
    <property type="gene designation" value="gpatch11"/>
</dbReference>
<dbReference type="eggNOG" id="KOG1994">
    <property type="taxonomic scope" value="Eukaryota"/>
</dbReference>
<dbReference type="InParanoid" id="Q6DGZ0"/>
<dbReference type="OrthoDB" id="786951at2759"/>
<dbReference type="PhylomeDB" id="Q6DGZ0"/>
<dbReference type="PRO" id="PR:Q6DGZ0"/>
<dbReference type="Proteomes" id="UP000000437">
    <property type="component" value="Chromosome 13"/>
</dbReference>
<dbReference type="GO" id="GO:0000776">
    <property type="term" value="C:kinetochore"/>
    <property type="evidence" value="ECO:0000250"/>
    <property type="project" value="UniProtKB"/>
</dbReference>
<dbReference type="GO" id="GO:0003676">
    <property type="term" value="F:nucleic acid binding"/>
    <property type="evidence" value="ECO:0007669"/>
    <property type="project" value="InterPro"/>
</dbReference>
<dbReference type="InterPro" id="IPR025239">
    <property type="entry name" value="DUF4187"/>
</dbReference>
<dbReference type="InterPro" id="IPR000467">
    <property type="entry name" value="G_patch_dom"/>
</dbReference>
<dbReference type="InterPro" id="IPR039249">
    <property type="entry name" value="GPATCH11"/>
</dbReference>
<dbReference type="PANTHER" id="PTHR21032">
    <property type="entry name" value="G PATCH DOMAIN-CONTAINING PROTEIN 11"/>
    <property type="match status" value="1"/>
</dbReference>
<dbReference type="PANTHER" id="PTHR21032:SF0">
    <property type="entry name" value="G PATCH DOMAIN-CONTAINING PROTEIN 11"/>
    <property type="match status" value="1"/>
</dbReference>
<dbReference type="Pfam" id="PF13821">
    <property type="entry name" value="DUF4187"/>
    <property type="match status" value="1"/>
</dbReference>
<dbReference type="Pfam" id="PF01585">
    <property type="entry name" value="G-patch"/>
    <property type="match status" value="1"/>
</dbReference>
<dbReference type="SMART" id="SM01173">
    <property type="entry name" value="DUF4187"/>
    <property type="match status" value="1"/>
</dbReference>
<dbReference type="SMART" id="SM00443">
    <property type="entry name" value="G_patch"/>
    <property type="match status" value="1"/>
</dbReference>
<dbReference type="PROSITE" id="PS50174">
    <property type="entry name" value="G_PATCH"/>
    <property type="match status" value="1"/>
</dbReference>
<keyword id="KW-0137">Centromere</keyword>
<keyword id="KW-0158">Chromosome</keyword>
<keyword id="KW-0175">Coiled coil</keyword>
<keyword id="KW-0995">Kinetochore</keyword>
<keyword id="KW-1185">Reference proteome</keyword>